<gene>
    <name evidence="1" type="primary">psd</name>
    <name type="ordered locus">SDY_4432</name>
</gene>
<organism>
    <name type="scientific">Shigella dysenteriae serotype 1 (strain Sd197)</name>
    <dbReference type="NCBI Taxonomy" id="300267"/>
    <lineage>
        <taxon>Bacteria</taxon>
        <taxon>Pseudomonadati</taxon>
        <taxon>Pseudomonadota</taxon>
        <taxon>Gammaproteobacteria</taxon>
        <taxon>Enterobacterales</taxon>
        <taxon>Enterobacteriaceae</taxon>
        <taxon>Shigella</taxon>
    </lineage>
</organism>
<protein>
    <recommendedName>
        <fullName evidence="1">Phosphatidylserine decarboxylase proenzyme</fullName>
        <ecNumber evidence="1">4.1.1.65</ecNumber>
    </recommendedName>
    <component>
        <recommendedName>
            <fullName evidence="1">Phosphatidylserine decarboxylase alpha chain</fullName>
        </recommendedName>
    </component>
    <component>
        <recommendedName>
            <fullName evidence="1">Phosphatidylserine decarboxylase beta chain</fullName>
        </recommendedName>
    </component>
</protein>
<reference key="1">
    <citation type="journal article" date="2005" name="Nucleic Acids Res.">
        <title>Genome dynamics and diversity of Shigella species, the etiologic agents of bacillary dysentery.</title>
        <authorList>
            <person name="Yang F."/>
            <person name="Yang J."/>
            <person name="Zhang X."/>
            <person name="Chen L."/>
            <person name="Jiang Y."/>
            <person name="Yan Y."/>
            <person name="Tang X."/>
            <person name="Wang J."/>
            <person name="Xiong Z."/>
            <person name="Dong J."/>
            <person name="Xue Y."/>
            <person name="Zhu Y."/>
            <person name="Xu X."/>
            <person name="Sun L."/>
            <person name="Chen S."/>
            <person name="Nie H."/>
            <person name="Peng J."/>
            <person name="Xu J."/>
            <person name="Wang Y."/>
            <person name="Yuan Z."/>
            <person name="Wen Y."/>
            <person name="Yao Z."/>
            <person name="Shen Y."/>
            <person name="Qiang B."/>
            <person name="Hou Y."/>
            <person name="Yu J."/>
            <person name="Jin Q."/>
        </authorList>
    </citation>
    <scope>NUCLEOTIDE SEQUENCE [LARGE SCALE GENOMIC DNA]</scope>
    <source>
        <strain>Sd197</strain>
    </source>
</reference>
<sequence>MLNSFKLSLQYILPKLWLTRLAGWGASKRAGWLTKLVIDLFVKYYKVDMKEAQKPDTASYRTFNEFFVRPLRDEVRPIDTDPNVLVMPADGVISQLGKIEEDKILQAKGHNYSLEALLAGNYLMADLFRNGTFVTTYLSPRDYHRVHMPCNGILREMIYVPGDLFSVNHLTAQNVPNLFARNERVICLFDTEFGPMAQILVGATIVGSIETVWAGTITPPREGIIKRWTWPAGENDGSVALLKGQEMGRFKLGSTVINLFAPGKVNLVEQLESLSVTKIGQPLAVSTETFVTPDAEPAPLPAEEIEAEHYASPLVDDKKDQV</sequence>
<feature type="chain" id="PRO_0000262159" description="Phosphatidylserine decarboxylase beta chain" evidence="1">
    <location>
        <begin position="1"/>
        <end position="253"/>
    </location>
</feature>
<feature type="chain" id="PRO_0000262160" description="Phosphatidylserine decarboxylase alpha chain" evidence="1">
    <location>
        <begin position="254"/>
        <end position="322"/>
    </location>
</feature>
<feature type="active site" description="Charge relay system; for autoendoproteolytic cleavage activity" evidence="1">
    <location>
        <position position="90"/>
    </location>
</feature>
<feature type="active site" description="Charge relay system; for autoendoproteolytic cleavage activity" evidence="1">
    <location>
        <position position="147"/>
    </location>
</feature>
<feature type="active site" description="Charge relay system; for autoendoproteolytic cleavage activity" evidence="1">
    <location>
        <position position="254"/>
    </location>
</feature>
<feature type="active site" description="Schiff-base intermediate with substrate; via pyruvic acid; for decarboxylase activity" evidence="1">
    <location>
        <position position="254"/>
    </location>
</feature>
<feature type="site" description="Cleavage (non-hydrolytic); by autocatalysis" evidence="1">
    <location>
        <begin position="253"/>
        <end position="254"/>
    </location>
</feature>
<feature type="modified residue" description="Pyruvic acid (Ser); by autocatalysis" evidence="1">
    <location>
        <position position="254"/>
    </location>
</feature>
<accession>Q328E0</accession>
<comment type="function">
    <text evidence="1">Catalyzes the formation of phosphatidylethanolamine (PtdEtn) from phosphatidylserine (PtdSer).</text>
</comment>
<comment type="catalytic activity">
    <reaction evidence="1">
        <text>a 1,2-diacyl-sn-glycero-3-phospho-L-serine + H(+) = a 1,2-diacyl-sn-glycero-3-phosphoethanolamine + CO2</text>
        <dbReference type="Rhea" id="RHEA:20828"/>
        <dbReference type="ChEBI" id="CHEBI:15378"/>
        <dbReference type="ChEBI" id="CHEBI:16526"/>
        <dbReference type="ChEBI" id="CHEBI:57262"/>
        <dbReference type="ChEBI" id="CHEBI:64612"/>
        <dbReference type="EC" id="4.1.1.65"/>
    </reaction>
</comment>
<comment type="cofactor">
    <cofactor evidence="1">
        <name>pyruvate</name>
        <dbReference type="ChEBI" id="CHEBI:15361"/>
    </cofactor>
    <text evidence="1">Binds 1 pyruvoyl group covalently per subunit.</text>
</comment>
<comment type="pathway">
    <text evidence="1">Phospholipid metabolism; phosphatidylethanolamine biosynthesis; phosphatidylethanolamine from CDP-diacylglycerol: step 2/2.</text>
</comment>
<comment type="subunit">
    <text evidence="1">Heterodimer of a large membrane-associated beta subunit and a small pyruvoyl-containing alpha subunit.</text>
</comment>
<comment type="subcellular location">
    <subcellularLocation>
        <location evidence="1">Cell membrane</location>
        <topology evidence="1">Peripheral membrane protein</topology>
    </subcellularLocation>
</comment>
<comment type="PTM">
    <text evidence="1">Is synthesized initially as an inactive proenzyme. Formation of the active enzyme involves a self-maturation process in which the active site pyruvoyl group is generated from an internal serine residue via an autocatalytic post-translational modification. Two non-identical subunits are generated from the proenzyme in this reaction, and the pyruvate is formed at the N-terminus of the alpha chain, which is derived from the carboxyl end of the proenzyme. The autoendoproteolytic cleavage occurs by a canonical serine protease mechanism, in which the side chain hydroxyl group of the serine supplies its oxygen atom to form the C-terminus of the beta chain, while the remainder of the serine residue undergoes an oxidative deamination to produce ammonia and the pyruvoyl prosthetic group on the alpha chain. During this reaction, the Ser that is part of the protease active site of the proenzyme becomes the pyruvoyl prosthetic group, which constitutes an essential element of the active site of the mature decarboxylase.</text>
</comment>
<comment type="similarity">
    <text evidence="1">Belongs to the phosphatidylserine decarboxylase family. PSD-B subfamily. Prokaryotic type I sub-subfamily.</text>
</comment>
<dbReference type="EC" id="4.1.1.65" evidence="1"/>
<dbReference type="EMBL" id="CP000034">
    <property type="protein sequence ID" value="ABB64315.1"/>
    <property type="molecule type" value="Genomic_DNA"/>
</dbReference>
<dbReference type="RefSeq" id="WP_000934923.1">
    <property type="nucleotide sequence ID" value="NC_007606.1"/>
</dbReference>
<dbReference type="RefSeq" id="YP_405806.1">
    <property type="nucleotide sequence ID" value="NC_007606.1"/>
</dbReference>
<dbReference type="SMR" id="Q328E0"/>
<dbReference type="STRING" id="300267.SDY_4432"/>
<dbReference type="EnsemblBacteria" id="ABB64315">
    <property type="protein sequence ID" value="ABB64315"/>
    <property type="gene ID" value="SDY_4432"/>
</dbReference>
<dbReference type="KEGG" id="sdy:SDY_4432"/>
<dbReference type="PATRIC" id="fig|300267.13.peg.5230"/>
<dbReference type="HOGENOM" id="CLU_029061_4_1_6"/>
<dbReference type="UniPathway" id="UPA00558">
    <property type="reaction ID" value="UER00616"/>
</dbReference>
<dbReference type="Proteomes" id="UP000002716">
    <property type="component" value="Chromosome"/>
</dbReference>
<dbReference type="GO" id="GO:0005886">
    <property type="term" value="C:plasma membrane"/>
    <property type="evidence" value="ECO:0007669"/>
    <property type="project" value="UniProtKB-SubCell"/>
</dbReference>
<dbReference type="GO" id="GO:0004609">
    <property type="term" value="F:phosphatidylserine decarboxylase activity"/>
    <property type="evidence" value="ECO:0007669"/>
    <property type="project" value="UniProtKB-UniRule"/>
</dbReference>
<dbReference type="GO" id="GO:0006646">
    <property type="term" value="P:phosphatidylethanolamine biosynthetic process"/>
    <property type="evidence" value="ECO:0007669"/>
    <property type="project" value="UniProtKB-UniRule"/>
</dbReference>
<dbReference type="HAMAP" id="MF_00662">
    <property type="entry name" value="PS_decarb_PSD_B_type1"/>
    <property type="match status" value="1"/>
</dbReference>
<dbReference type="InterPro" id="IPR003817">
    <property type="entry name" value="PS_Dcarbxylase"/>
</dbReference>
<dbReference type="InterPro" id="IPR033177">
    <property type="entry name" value="PSD-B"/>
</dbReference>
<dbReference type="InterPro" id="IPR033178">
    <property type="entry name" value="PSD_type1_pro"/>
</dbReference>
<dbReference type="NCBIfam" id="TIGR00163">
    <property type="entry name" value="PS_decarb"/>
    <property type="match status" value="1"/>
</dbReference>
<dbReference type="PANTHER" id="PTHR10067">
    <property type="entry name" value="PHOSPHATIDYLSERINE DECARBOXYLASE"/>
    <property type="match status" value="1"/>
</dbReference>
<dbReference type="PANTHER" id="PTHR10067:SF6">
    <property type="entry name" value="PHOSPHATIDYLSERINE DECARBOXYLASE PROENZYME, MITOCHONDRIAL"/>
    <property type="match status" value="1"/>
</dbReference>
<dbReference type="Pfam" id="PF02666">
    <property type="entry name" value="PS_Dcarbxylase"/>
    <property type="match status" value="1"/>
</dbReference>
<keyword id="KW-1003">Cell membrane</keyword>
<keyword id="KW-0210">Decarboxylase</keyword>
<keyword id="KW-0444">Lipid biosynthesis</keyword>
<keyword id="KW-0443">Lipid metabolism</keyword>
<keyword id="KW-0456">Lyase</keyword>
<keyword id="KW-0472">Membrane</keyword>
<keyword id="KW-0594">Phospholipid biosynthesis</keyword>
<keyword id="KW-1208">Phospholipid metabolism</keyword>
<keyword id="KW-0670">Pyruvate</keyword>
<keyword id="KW-1185">Reference proteome</keyword>
<keyword id="KW-0865">Zymogen</keyword>
<name>PSD_SHIDS</name>
<evidence type="ECO:0000255" key="1">
    <source>
        <dbReference type="HAMAP-Rule" id="MF_00662"/>
    </source>
</evidence>
<proteinExistence type="inferred from homology"/>